<dbReference type="EC" id="2.7.4.6" evidence="1"/>
<dbReference type="EMBL" id="CP000009">
    <property type="protein sequence ID" value="AAW61665.1"/>
    <property type="molecule type" value="Genomic_DNA"/>
</dbReference>
<dbReference type="RefSeq" id="WP_011253445.1">
    <property type="nucleotide sequence ID" value="NZ_LT900338.1"/>
</dbReference>
<dbReference type="SMR" id="Q5FPN1"/>
<dbReference type="STRING" id="290633.GOX1927"/>
<dbReference type="GeneID" id="56906268"/>
<dbReference type="KEGG" id="gox:GOX1927"/>
<dbReference type="eggNOG" id="COG0105">
    <property type="taxonomic scope" value="Bacteria"/>
</dbReference>
<dbReference type="HOGENOM" id="CLU_060216_8_1_5"/>
<dbReference type="Proteomes" id="UP000006375">
    <property type="component" value="Chromosome"/>
</dbReference>
<dbReference type="GO" id="GO:0005737">
    <property type="term" value="C:cytoplasm"/>
    <property type="evidence" value="ECO:0007669"/>
    <property type="project" value="UniProtKB-SubCell"/>
</dbReference>
<dbReference type="GO" id="GO:0005524">
    <property type="term" value="F:ATP binding"/>
    <property type="evidence" value="ECO:0007669"/>
    <property type="project" value="UniProtKB-UniRule"/>
</dbReference>
<dbReference type="GO" id="GO:0046872">
    <property type="term" value="F:metal ion binding"/>
    <property type="evidence" value="ECO:0007669"/>
    <property type="project" value="UniProtKB-KW"/>
</dbReference>
<dbReference type="GO" id="GO:0004550">
    <property type="term" value="F:nucleoside diphosphate kinase activity"/>
    <property type="evidence" value="ECO:0007669"/>
    <property type="project" value="UniProtKB-UniRule"/>
</dbReference>
<dbReference type="GO" id="GO:0006241">
    <property type="term" value="P:CTP biosynthetic process"/>
    <property type="evidence" value="ECO:0007669"/>
    <property type="project" value="UniProtKB-UniRule"/>
</dbReference>
<dbReference type="GO" id="GO:0006183">
    <property type="term" value="P:GTP biosynthetic process"/>
    <property type="evidence" value="ECO:0007669"/>
    <property type="project" value="UniProtKB-UniRule"/>
</dbReference>
<dbReference type="GO" id="GO:0006228">
    <property type="term" value="P:UTP biosynthetic process"/>
    <property type="evidence" value="ECO:0007669"/>
    <property type="project" value="UniProtKB-UniRule"/>
</dbReference>
<dbReference type="CDD" id="cd04413">
    <property type="entry name" value="NDPk_I"/>
    <property type="match status" value="1"/>
</dbReference>
<dbReference type="FunFam" id="3.30.70.141:FF:000001">
    <property type="entry name" value="Nucleoside diphosphate kinase"/>
    <property type="match status" value="1"/>
</dbReference>
<dbReference type="Gene3D" id="3.30.70.141">
    <property type="entry name" value="Nucleoside diphosphate kinase-like domain"/>
    <property type="match status" value="1"/>
</dbReference>
<dbReference type="HAMAP" id="MF_00451">
    <property type="entry name" value="NDP_kinase"/>
    <property type="match status" value="1"/>
</dbReference>
<dbReference type="InterPro" id="IPR034907">
    <property type="entry name" value="NDK-like_dom"/>
</dbReference>
<dbReference type="InterPro" id="IPR036850">
    <property type="entry name" value="NDK-like_dom_sf"/>
</dbReference>
<dbReference type="InterPro" id="IPR001564">
    <property type="entry name" value="Nucleoside_diP_kinase"/>
</dbReference>
<dbReference type="InterPro" id="IPR023005">
    <property type="entry name" value="Nucleoside_diP_kinase_AS"/>
</dbReference>
<dbReference type="NCBIfam" id="NF001908">
    <property type="entry name" value="PRK00668.1"/>
    <property type="match status" value="1"/>
</dbReference>
<dbReference type="PANTHER" id="PTHR46161">
    <property type="entry name" value="NUCLEOSIDE DIPHOSPHATE KINASE"/>
    <property type="match status" value="1"/>
</dbReference>
<dbReference type="PANTHER" id="PTHR46161:SF3">
    <property type="entry name" value="NUCLEOSIDE DIPHOSPHATE KINASE DDB_G0292928-RELATED"/>
    <property type="match status" value="1"/>
</dbReference>
<dbReference type="Pfam" id="PF00334">
    <property type="entry name" value="NDK"/>
    <property type="match status" value="1"/>
</dbReference>
<dbReference type="PRINTS" id="PR01243">
    <property type="entry name" value="NUCDPKINASE"/>
</dbReference>
<dbReference type="SMART" id="SM00562">
    <property type="entry name" value="NDK"/>
    <property type="match status" value="1"/>
</dbReference>
<dbReference type="SUPFAM" id="SSF54919">
    <property type="entry name" value="Nucleoside diphosphate kinase, NDK"/>
    <property type="match status" value="1"/>
</dbReference>
<dbReference type="PROSITE" id="PS00469">
    <property type="entry name" value="NDPK"/>
    <property type="match status" value="1"/>
</dbReference>
<dbReference type="PROSITE" id="PS51374">
    <property type="entry name" value="NDPK_LIKE"/>
    <property type="match status" value="1"/>
</dbReference>
<evidence type="ECO:0000255" key="1">
    <source>
        <dbReference type="HAMAP-Rule" id="MF_00451"/>
    </source>
</evidence>
<feature type="chain" id="PRO_0000136988" description="Nucleoside diphosphate kinase">
    <location>
        <begin position="1"/>
        <end position="140"/>
    </location>
</feature>
<feature type="active site" description="Pros-phosphohistidine intermediate" evidence="1">
    <location>
        <position position="117"/>
    </location>
</feature>
<feature type="binding site" evidence="1">
    <location>
        <position position="11"/>
    </location>
    <ligand>
        <name>ATP</name>
        <dbReference type="ChEBI" id="CHEBI:30616"/>
    </ligand>
</feature>
<feature type="binding site" evidence="1">
    <location>
        <position position="59"/>
    </location>
    <ligand>
        <name>ATP</name>
        <dbReference type="ChEBI" id="CHEBI:30616"/>
    </ligand>
</feature>
<feature type="binding site" evidence="1">
    <location>
        <position position="87"/>
    </location>
    <ligand>
        <name>ATP</name>
        <dbReference type="ChEBI" id="CHEBI:30616"/>
    </ligand>
</feature>
<feature type="binding site" evidence="1">
    <location>
        <position position="93"/>
    </location>
    <ligand>
        <name>ATP</name>
        <dbReference type="ChEBI" id="CHEBI:30616"/>
    </ligand>
</feature>
<feature type="binding site" evidence="1">
    <location>
        <position position="104"/>
    </location>
    <ligand>
        <name>ATP</name>
        <dbReference type="ChEBI" id="CHEBI:30616"/>
    </ligand>
</feature>
<feature type="binding site" evidence="1">
    <location>
        <position position="114"/>
    </location>
    <ligand>
        <name>ATP</name>
        <dbReference type="ChEBI" id="CHEBI:30616"/>
    </ligand>
</feature>
<organism>
    <name type="scientific">Gluconobacter oxydans (strain 621H)</name>
    <name type="common">Gluconobacter suboxydans</name>
    <dbReference type="NCBI Taxonomy" id="290633"/>
    <lineage>
        <taxon>Bacteria</taxon>
        <taxon>Pseudomonadati</taxon>
        <taxon>Pseudomonadota</taxon>
        <taxon>Alphaproteobacteria</taxon>
        <taxon>Acetobacterales</taxon>
        <taxon>Acetobacteraceae</taxon>
        <taxon>Gluconobacter</taxon>
    </lineage>
</organism>
<accession>Q5FPN1</accession>
<name>NDK_GLUOX</name>
<gene>
    <name evidence="1" type="primary">ndk</name>
    <name type="ordered locus">GOX1927</name>
</gene>
<comment type="function">
    <text evidence="1">Major role in the synthesis of nucleoside triphosphates other than ATP. The ATP gamma phosphate is transferred to the NDP beta phosphate via a ping-pong mechanism, using a phosphorylated active-site intermediate.</text>
</comment>
<comment type="catalytic activity">
    <reaction evidence="1">
        <text>a 2'-deoxyribonucleoside 5'-diphosphate + ATP = a 2'-deoxyribonucleoside 5'-triphosphate + ADP</text>
        <dbReference type="Rhea" id="RHEA:44640"/>
        <dbReference type="ChEBI" id="CHEBI:30616"/>
        <dbReference type="ChEBI" id="CHEBI:61560"/>
        <dbReference type="ChEBI" id="CHEBI:73316"/>
        <dbReference type="ChEBI" id="CHEBI:456216"/>
        <dbReference type="EC" id="2.7.4.6"/>
    </reaction>
</comment>
<comment type="catalytic activity">
    <reaction evidence="1">
        <text>a ribonucleoside 5'-diphosphate + ATP = a ribonucleoside 5'-triphosphate + ADP</text>
        <dbReference type="Rhea" id="RHEA:18113"/>
        <dbReference type="ChEBI" id="CHEBI:30616"/>
        <dbReference type="ChEBI" id="CHEBI:57930"/>
        <dbReference type="ChEBI" id="CHEBI:61557"/>
        <dbReference type="ChEBI" id="CHEBI:456216"/>
        <dbReference type="EC" id="2.7.4.6"/>
    </reaction>
</comment>
<comment type="cofactor">
    <cofactor evidence="1">
        <name>Mg(2+)</name>
        <dbReference type="ChEBI" id="CHEBI:18420"/>
    </cofactor>
</comment>
<comment type="subunit">
    <text evidence="1">Homotetramer.</text>
</comment>
<comment type="subcellular location">
    <subcellularLocation>
        <location evidence="1">Cytoplasm</location>
    </subcellularLocation>
</comment>
<comment type="similarity">
    <text evidence="1">Belongs to the NDK family.</text>
</comment>
<reference key="1">
    <citation type="journal article" date="2005" name="Nat. Biotechnol.">
        <title>Complete genome sequence of the acetic acid bacterium Gluconobacter oxydans.</title>
        <authorList>
            <person name="Prust C."/>
            <person name="Hoffmeister M."/>
            <person name="Liesegang H."/>
            <person name="Wiezer A."/>
            <person name="Fricke W.F."/>
            <person name="Ehrenreich A."/>
            <person name="Gottschalk G."/>
            <person name="Deppenmeier U."/>
        </authorList>
    </citation>
    <scope>NUCLEOTIDE SEQUENCE [LARGE SCALE GENOMIC DNA]</scope>
    <source>
        <strain>621H</strain>
    </source>
</reference>
<keyword id="KW-0067">ATP-binding</keyword>
<keyword id="KW-0963">Cytoplasm</keyword>
<keyword id="KW-0418">Kinase</keyword>
<keyword id="KW-0460">Magnesium</keyword>
<keyword id="KW-0479">Metal-binding</keyword>
<keyword id="KW-0546">Nucleotide metabolism</keyword>
<keyword id="KW-0547">Nucleotide-binding</keyword>
<keyword id="KW-0597">Phosphoprotein</keyword>
<keyword id="KW-1185">Reference proteome</keyword>
<keyword id="KW-0808">Transferase</keyword>
<protein>
    <recommendedName>
        <fullName evidence="1">Nucleoside diphosphate kinase</fullName>
        <shortName evidence="1">NDK</shortName>
        <shortName evidence="1">NDP kinase</shortName>
        <ecNumber evidence="1">2.7.4.6</ecNumber>
    </recommendedName>
    <alternativeName>
        <fullName evidence="1">Nucleoside-2-P kinase</fullName>
    </alternativeName>
</protein>
<proteinExistence type="inferred from homology"/>
<sequence>MALERTLSIIKPDATKRNLTGKINAVFEGAGLRIVAQKRIQLTEKQAGAFYAVHKERPFYGSLVSSMIAEPVVVQVLQGENAVAKNREVMGATNPADAAEGTVRKLFAESIEANSVHGSDSLENAKNEISFFFAETEILP</sequence>